<reference key="1">
    <citation type="journal article" date="1991" name="Mol. Endocrinol.">
        <title>The retinol-binding protein of the expanding pig blastocyst: molecular cloning and expression in trophectoderm and embryonic disc.</title>
        <authorList>
            <person name="Trout W.E."/>
            <person name="McDonnell J.J."/>
            <person name="Kramer K.K."/>
            <person name="Baumbach G.A."/>
            <person name="Roberts R.M."/>
        </authorList>
    </citation>
    <scope>NUCLEOTIDE SEQUENCE [MRNA]</scope>
</reference>
<reference key="2">
    <citation type="journal article" date="1990" name="Biol. Reprod.">
        <title>Retinol-binding protein: a major secretory product of the pig conceptus.</title>
        <authorList>
            <person name="Harney J.P."/>
            <person name="Mirando M.A."/>
            <person name="Smith L.C."/>
            <person name="Bazer F.W."/>
        </authorList>
    </citation>
    <scope>PROTEIN SEQUENCE OF 19-51</scope>
    <scope>SUBCELLULAR LOCATION</scope>
    <scope>DEVELOPMENTAL STAGE</scope>
</reference>
<reference key="3">
    <citation type="journal article" date="1998" name="Acta Crystallogr. D">
        <title>Structure of pig plasma retinol-binding protein at 1.65-A resolution.</title>
        <authorList>
            <person name="Zanotti G."/>
            <person name="Panzalorto M."/>
            <person name="Marcato A."/>
            <person name="Malpeli G."/>
            <person name="Folli C."/>
            <person name="Berni R."/>
        </authorList>
    </citation>
    <scope>X-RAY CRYSTALLOGRAPHY (1.65 ANGSTROMS) OF 19-201 IN COMPLEX WITH RETINOL</scope>
    <scope>SEQUENCE REVISION TO 134 AND 185</scope>
    <scope>SUBCELLULAR LOCATION</scope>
    <scope>DISULFIDE BONDS</scope>
</reference>
<sequence>MEWVWALVLLAALGSAQAERDCRVSSFRVKENFDKARFSGTWYAMAKKDPEGLFLQDNIVAEFSVDENGHMSATAKGRVRLLNNWDVCADMVGTFTDTEDPAKFKMKYWGVASFLQKGNDDHWIIDTDYDTYAVQYSCRLQNLDGTCADSYSFVFARDPHGFSPEVQKIVRQRQEELCLARQYRIITHNGYCDGKSERNIL</sequence>
<protein>
    <recommendedName>
        <fullName>Retinol-binding protein 4</fullName>
    </recommendedName>
    <alternativeName>
        <fullName>Plasma retinol-binding protein</fullName>
        <shortName>PRBP</shortName>
        <shortName>RBP</shortName>
    </alternativeName>
</protein>
<gene>
    <name type="primary">RBP4</name>
</gene>
<proteinExistence type="evidence at protein level"/>
<accession>P27485</accession>
<comment type="function">
    <text evidence="1">Retinol-binding protein that mediates retinol transport in blood plasma. Delivers retinol from the liver stores to the peripheral tissues. Transfers the bound all-trans retinol to STRA6, that then facilitates retinol transport across the cell membrane.</text>
</comment>
<comment type="subunit">
    <text evidence="1">Interacts with TTR. Interaction with TTR prevents its loss by filtration through the kidney glomeruli. Interacts with STRA6.</text>
</comment>
<comment type="subcellular location">
    <subcellularLocation>
        <location evidence="3 4">Secreted</location>
    </subcellularLocation>
</comment>
<comment type="developmental stage">
    <text evidence="3">Produced between days 10 and 15 of pregnancy and at day 15 found in both the peri-implantation conceptus (trophectoderm and yolk sac) and the endometrial surface and glandular epithelium. Found in allantoic fluid at day 30 of gestation.</text>
</comment>
<comment type="similarity">
    <text evidence="5">Belongs to the calycin superfamily. Lipocalin family.</text>
</comment>
<feature type="signal peptide" evidence="3">
    <location>
        <begin position="1"/>
        <end position="18"/>
    </location>
</feature>
<feature type="chain" id="PRO_0000017968" description="Retinol-binding protein 4">
    <location>
        <begin position="19"/>
        <end position="201"/>
    </location>
</feature>
<feature type="binding site" evidence="4 6">
    <location>
        <position position="116"/>
    </location>
    <ligand>
        <name>substrate</name>
    </ligand>
</feature>
<feature type="modified residue" description="Omega-N-methylarginine" evidence="2">
    <location>
        <position position="139"/>
    </location>
</feature>
<feature type="disulfide bond" evidence="4 6">
    <location>
        <begin position="22"/>
        <end position="178"/>
    </location>
</feature>
<feature type="disulfide bond" evidence="4 6">
    <location>
        <begin position="88"/>
        <end position="192"/>
    </location>
</feature>
<feature type="disulfide bond" evidence="4 6">
    <location>
        <begin position="138"/>
        <end position="147"/>
    </location>
</feature>
<feature type="sequence conflict" description="In Ref. 1; AAA31113." evidence="5" ref="1">
    <original>V</original>
    <variation>A</variation>
    <location>
        <position position="134"/>
    </location>
</feature>
<feature type="sequence conflict" description="In Ref. 1; AAA31113." evidence="5" ref="1">
    <original>I</original>
    <variation>L</variation>
    <location>
        <position position="185"/>
    </location>
</feature>
<feature type="helix" evidence="7">
    <location>
        <begin position="24"/>
        <end position="26"/>
    </location>
</feature>
<feature type="helix" evidence="7">
    <location>
        <begin position="35"/>
        <end position="38"/>
    </location>
</feature>
<feature type="strand" evidence="7">
    <location>
        <begin position="40"/>
        <end position="48"/>
    </location>
</feature>
<feature type="strand" evidence="7">
    <location>
        <begin position="51"/>
        <end position="53"/>
    </location>
</feature>
<feature type="strand" evidence="7">
    <location>
        <begin position="55"/>
        <end position="65"/>
    </location>
</feature>
<feature type="strand" evidence="7">
    <location>
        <begin position="71"/>
        <end position="80"/>
    </location>
</feature>
<feature type="strand" evidence="7">
    <location>
        <begin position="86"/>
        <end position="97"/>
    </location>
</feature>
<feature type="strand" evidence="7">
    <location>
        <begin position="103"/>
        <end position="112"/>
    </location>
</feature>
<feature type="strand" evidence="7">
    <location>
        <begin position="118"/>
        <end position="127"/>
    </location>
</feature>
<feature type="strand" evidence="7">
    <location>
        <begin position="129"/>
        <end position="141"/>
    </location>
</feature>
<feature type="strand" evidence="7">
    <location>
        <begin position="145"/>
        <end position="158"/>
    </location>
</feature>
<feature type="helix" evidence="7">
    <location>
        <begin position="164"/>
        <end position="176"/>
    </location>
</feature>
<organism>
    <name type="scientific">Sus scrofa</name>
    <name type="common">Pig</name>
    <dbReference type="NCBI Taxonomy" id="9823"/>
    <lineage>
        <taxon>Eukaryota</taxon>
        <taxon>Metazoa</taxon>
        <taxon>Chordata</taxon>
        <taxon>Craniata</taxon>
        <taxon>Vertebrata</taxon>
        <taxon>Euteleostomi</taxon>
        <taxon>Mammalia</taxon>
        <taxon>Eutheria</taxon>
        <taxon>Laurasiatheria</taxon>
        <taxon>Artiodactyla</taxon>
        <taxon>Suina</taxon>
        <taxon>Suidae</taxon>
        <taxon>Sus</taxon>
    </lineage>
</organism>
<name>RET4_PIG</name>
<keyword id="KW-0002">3D-structure</keyword>
<keyword id="KW-0903">Direct protein sequencing</keyword>
<keyword id="KW-1015">Disulfide bond</keyword>
<keyword id="KW-0488">Methylation</keyword>
<keyword id="KW-1185">Reference proteome</keyword>
<keyword id="KW-0683">Retinol-binding</keyword>
<keyword id="KW-0964">Secreted</keyword>
<keyword id="KW-0732">Signal</keyword>
<keyword id="KW-0813">Transport</keyword>
<keyword id="KW-0845">Vitamin A</keyword>
<evidence type="ECO:0000250" key="1">
    <source>
        <dbReference type="UniProtKB" id="P02753"/>
    </source>
</evidence>
<evidence type="ECO:0000250" key="2">
    <source>
        <dbReference type="UniProtKB" id="Q00724"/>
    </source>
</evidence>
<evidence type="ECO:0000269" key="3">
    <source>
    </source>
</evidence>
<evidence type="ECO:0000269" key="4">
    <source>
    </source>
</evidence>
<evidence type="ECO:0000305" key="5"/>
<evidence type="ECO:0007744" key="6">
    <source>
        <dbReference type="PDB" id="1AQB"/>
    </source>
</evidence>
<evidence type="ECO:0007829" key="7">
    <source>
        <dbReference type="PDB" id="1AQB"/>
    </source>
</evidence>
<dbReference type="EMBL" id="M68860">
    <property type="protein sequence ID" value="AAA31113.1"/>
    <property type="molecule type" value="mRNA"/>
</dbReference>
<dbReference type="PIR" id="A39486">
    <property type="entry name" value="A39486"/>
</dbReference>
<dbReference type="RefSeq" id="NP_999222.1">
    <property type="nucleotide sequence ID" value="NM_214057.1"/>
</dbReference>
<dbReference type="PDB" id="1AQB">
    <property type="method" value="X-ray"/>
    <property type="resolution" value="1.65 A"/>
    <property type="chains" value="A=19-201"/>
</dbReference>
<dbReference type="PDBsum" id="1AQB"/>
<dbReference type="SMR" id="P27485"/>
<dbReference type="FunCoup" id="P27485">
    <property type="interactions" value="312"/>
</dbReference>
<dbReference type="STRING" id="9823.ENSSSCP00000038691"/>
<dbReference type="PaxDb" id="9823-ENSSSCP00000011168"/>
<dbReference type="PeptideAtlas" id="P27485"/>
<dbReference type="GeneID" id="397124"/>
<dbReference type="KEGG" id="ssc:397124"/>
<dbReference type="CTD" id="5950"/>
<dbReference type="eggNOG" id="ENOG502RXEW">
    <property type="taxonomic scope" value="Eukaryota"/>
</dbReference>
<dbReference type="InParanoid" id="P27485"/>
<dbReference type="OrthoDB" id="546632at2759"/>
<dbReference type="EvolutionaryTrace" id="P27485"/>
<dbReference type="Proteomes" id="UP000008227">
    <property type="component" value="Unplaced"/>
</dbReference>
<dbReference type="Proteomes" id="UP000314985">
    <property type="component" value="Unplaced"/>
</dbReference>
<dbReference type="Proteomes" id="UP000694570">
    <property type="component" value="Unplaced"/>
</dbReference>
<dbReference type="Proteomes" id="UP000694571">
    <property type="component" value="Unplaced"/>
</dbReference>
<dbReference type="Proteomes" id="UP000694720">
    <property type="component" value="Unplaced"/>
</dbReference>
<dbReference type="Proteomes" id="UP000694722">
    <property type="component" value="Unplaced"/>
</dbReference>
<dbReference type="Proteomes" id="UP000694723">
    <property type="component" value="Unplaced"/>
</dbReference>
<dbReference type="Proteomes" id="UP000694724">
    <property type="component" value="Unplaced"/>
</dbReference>
<dbReference type="Proteomes" id="UP000694725">
    <property type="component" value="Unplaced"/>
</dbReference>
<dbReference type="Proteomes" id="UP000694726">
    <property type="component" value="Unplaced"/>
</dbReference>
<dbReference type="Proteomes" id="UP000694727">
    <property type="component" value="Unplaced"/>
</dbReference>
<dbReference type="Proteomes" id="UP000694728">
    <property type="component" value="Unplaced"/>
</dbReference>
<dbReference type="GO" id="GO:0005615">
    <property type="term" value="C:extracellular space"/>
    <property type="evidence" value="ECO:0000314"/>
    <property type="project" value="UniProtKB"/>
</dbReference>
<dbReference type="GO" id="GO:0016918">
    <property type="term" value="F:retinal binding"/>
    <property type="evidence" value="ECO:0007669"/>
    <property type="project" value="UniProtKB-KW"/>
</dbReference>
<dbReference type="GO" id="GO:0019841">
    <property type="term" value="F:retinol binding"/>
    <property type="evidence" value="ECO:0000314"/>
    <property type="project" value="UniProtKB"/>
</dbReference>
<dbReference type="GO" id="GO:0034632">
    <property type="term" value="F:retinol transmembrane transporter activity"/>
    <property type="evidence" value="ECO:0007669"/>
    <property type="project" value="InterPro"/>
</dbReference>
<dbReference type="GO" id="GO:0034633">
    <property type="term" value="P:retinol transport"/>
    <property type="evidence" value="ECO:0000318"/>
    <property type="project" value="GO_Central"/>
</dbReference>
<dbReference type="CDD" id="cd00743">
    <property type="entry name" value="lipocalin_RBP_like"/>
    <property type="match status" value="1"/>
</dbReference>
<dbReference type="FunFam" id="2.40.128.20:FF:000004">
    <property type="entry name" value="Retinol-binding protein 4"/>
    <property type="match status" value="1"/>
</dbReference>
<dbReference type="Gene3D" id="2.40.128.20">
    <property type="match status" value="1"/>
</dbReference>
<dbReference type="InterPro" id="IPR012674">
    <property type="entry name" value="Calycin"/>
</dbReference>
<dbReference type="InterPro" id="IPR022271">
    <property type="entry name" value="Lipocalin_ApoD"/>
</dbReference>
<dbReference type="InterPro" id="IPR022272">
    <property type="entry name" value="Lipocalin_CS"/>
</dbReference>
<dbReference type="InterPro" id="IPR000566">
    <property type="entry name" value="Lipocln_cytosolic_FA-bd_dom"/>
</dbReference>
<dbReference type="InterPro" id="IPR002449">
    <property type="entry name" value="Retinol-bd/Purpurin"/>
</dbReference>
<dbReference type="PANTHER" id="PTHR11873">
    <property type="entry name" value="RETINOL-BINDING PROTEIN 4"/>
    <property type="match status" value="1"/>
</dbReference>
<dbReference type="PANTHER" id="PTHR11873:SF2">
    <property type="entry name" value="RETINOL-BINDING PROTEIN 4"/>
    <property type="match status" value="1"/>
</dbReference>
<dbReference type="Pfam" id="PF00061">
    <property type="entry name" value="Lipocalin"/>
    <property type="match status" value="1"/>
</dbReference>
<dbReference type="PIRSF" id="PIRSF036893">
    <property type="entry name" value="Lipocalin_ApoD"/>
    <property type="match status" value="1"/>
</dbReference>
<dbReference type="PIRSF" id="PIRSF500204">
    <property type="entry name" value="RBP_purpurin"/>
    <property type="match status" value="1"/>
</dbReference>
<dbReference type="PRINTS" id="PR00179">
    <property type="entry name" value="LIPOCALIN"/>
</dbReference>
<dbReference type="PRINTS" id="PR01174">
    <property type="entry name" value="RETINOLBNDNG"/>
</dbReference>
<dbReference type="SUPFAM" id="SSF50814">
    <property type="entry name" value="Lipocalins"/>
    <property type="match status" value="1"/>
</dbReference>
<dbReference type="PROSITE" id="PS00213">
    <property type="entry name" value="LIPOCALIN"/>
    <property type="match status" value="1"/>
</dbReference>